<protein>
    <recommendedName>
        <fullName>LYR motif-containing protein 9</fullName>
    </recommendedName>
</protein>
<evidence type="ECO:0000305" key="1"/>
<comment type="similarity">
    <text evidence="1">Belongs to the complex I LYR family. LYRM9 subfamily.</text>
</comment>
<organism>
    <name type="scientific">Xenopus tropicalis</name>
    <name type="common">Western clawed frog</name>
    <name type="synonym">Silurana tropicalis</name>
    <dbReference type="NCBI Taxonomy" id="8364"/>
    <lineage>
        <taxon>Eukaryota</taxon>
        <taxon>Metazoa</taxon>
        <taxon>Chordata</taxon>
        <taxon>Craniata</taxon>
        <taxon>Vertebrata</taxon>
        <taxon>Euteleostomi</taxon>
        <taxon>Amphibia</taxon>
        <taxon>Batrachia</taxon>
        <taxon>Anura</taxon>
        <taxon>Pipoidea</taxon>
        <taxon>Pipidae</taxon>
        <taxon>Xenopodinae</taxon>
        <taxon>Xenopus</taxon>
        <taxon>Silurana</taxon>
    </lineage>
</organism>
<keyword id="KW-1185">Reference proteome</keyword>
<accession>B4F6X2</accession>
<reference key="1">
    <citation type="submission" date="2008-07" db="EMBL/GenBank/DDBJ databases">
        <authorList>
            <consortium name="NIH - Xenopus Gene Collection (XGC) project"/>
        </authorList>
    </citation>
    <scope>NUCLEOTIDE SEQUENCE [LARGE SCALE MRNA]</scope>
    <source>
        <strain>N6</strain>
        <tissue>Lung</tissue>
    </source>
</reference>
<proteinExistence type="inferred from homology"/>
<gene>
    <name type="primary">lyrm9</name>
</gene>
<name>LYRM9_XENTR</name>
<sequence length="78" mass="9333">MPPLPGAELVHNPLQLYRYLLRCCKLLPTESLQHYYRHSVKQSFRVHADEDDPERIQQIIKRAIEDADWVLNKYKKES</sequence>
<dbReference type="EMBL" id="BC168045">
    <property type="protein sequence ID" value="AAI68045.1"/>
    <property type="molecule type" value="mRNA"/>
</dbReference>
<dbReference type="RefSeq" id="NP_001165158.1">
    <property type="nucleotide sequence ID" value="NM_001171687.1"/>
</dbReference>
<dbReference type="RefSeq" id="XP_012812014.1">
    <property type="nucleotide sequence ID" value="XM_012956560.3"/>
</dbReference>
<dbReference type="RefSeq" id="XP_012812015.1">
    <property type="nucleotide sequence ID" value="XM_012956561.3"/>
</dbReference>
<dbReference type="RefSeq" id="XP_017946598.1">
    <property type="nucleotide sequence ID" value="XM_018091109.1"/>
</dbReference>
<dbReference type="RefSeq" id="XP_031751607.1">
    <property type="nucleotide sequence ID" value="XM_031895747.1"/>
</dbReference>
<dbReference type="SMR" id="B4F6X2"/>
<dbReference type="FunCoup" id="B4F6X2">
    <property type="interactions" value="11"/>
</dbReference>
<dbReference type="STRING" id="8364.ENSXETP00000054568"/>
<dbReference type="PaxDb" id="8364-ENSXETP00000043137"/>
<dbReference type="GeneID" id="100216103"/>
<dbReference type="KEGG" id="xtr:100216103"/>
<dbReference type="AGR" id="Xenbase:XB-GENE-5874439"/>
<dbReference type="CTD" id="201229"/>
<dbReference type="Xenbase" id="XB-GENE-5874439">
    <property type="gene designation" value="lyrm9"/>
</dbReference>
<dbReference type="eggNOG" id="ENOG502S9QI">
    <property type="taxonomic scope" value="Eukaryota"/>
</dbReference>
<dbReference type="HOGENOM" id="CLU_183410_0_0_1"/>
<dbReference type="InParanoid" id="B4F6X2"/>
<dbReference type="OMA" id="HYKHHVR"/>
<dbReference type="OrthoDB" id="190541at2759"/>
<dbReference type="PhylomeDB" id="B4F6X2"/>
<dbReference type="TreeFam" id="TF335914"/>
<dbReference type="Proteomes" id="UP000008143">
    <property type="component" value="Chromosome 2"/>
</dbReference>
<dbReference type="Bgee" id="ENSXETG00000035272">
    <property type="expression patterns" value="Expressed in testis and 13 other cell types or tissues"/>
</dbReference>
<dbReference type="CDD" id="cd20269">
    <property type="entry name" value="Complex1_LYR_LYRM9"/>
    <property type="match status" value="1"/>
</dbReference>
<dbReference type="InterPro" id="IPR008011">
    <property type="entry name" value="Complex1_LYR_dom"/>
</dbReference>
<dbReference type="InterPro" id="IPR045291">
    <property type="entry name" value="Complex1_LYR_LYRM9"/>
</dbReference>
<dbReference type="InterPro" id="IPR052151">
    <property type="entry name" value="Complex_I_LYR"/>
</dbReference>
<dbReference type="PANTHER" id="PTHR47061">
    <property type="entry name" value="LYR MOTIF-CONTAINING PROTEIN 9"/>
    <property type="match status" value="1"/>
</dbReference>
<dbReference type="PANTHER" id="PTHR47061:SF1">
    <property type="entry name" value="LYR MOTIF-CONTAINING PROTEIN 9"/>
    <property type="match status" value="1"/>
</dbReference>
<dbReference type="Pfam" id="PF05347">
    <property type="entry name" value="Complex1_LYR"/>
    <property type="match status" value="1"/>
</dbReference>
<feature type="chain" id="PRO_0000365119" description="LYR motif-containing protein 9">
    <location>
        <begin position="1"/>
        <end position="78"/>
    </location>
</feature>